<reference key="1">
    <citation type="journal article" date="2001" name="Clin. Cancer Res.">
        <title>Identification of a novel membrane protein, HP59, with therapeutic potential as a target of tumor angiogenesis.</title>
        <authorList>
            <person name="Fu C."/>
            <person name="Bardhan S."/>
            <person name="Cetateanu N.D."/>
            <person name="Wamil B.D."/>
            <person name="Wang Y."/>
            <person name="Yan H.-P."/>
            <person name="Shi E."/>
            <person name="Carter C."/>
            <person name="Venkov C."/>
            <person name="Yakes F.M."/>
            <person name="Page D.L."/>
            <person name="Lloyd R.S."/>
            <person name="Mernaugh R.L."/>
            <person name="Hellerqvist C.G."/>
        </authorList>
    </citation>
    <scope>NUCLEOTIDE SEQUENCE [MRNA] (ISOFORM 1)</scope>
    <scope>TISSUE SPECIFICITY</scope>
    <scope>DEVELOPMENTAL STAGE</scope>
</reference>
<reference key="2">
    <citation type="journal article" date="1999" name="Nat. Genet.">
        <title>A new gene, encoding an anion transporter, is mutated in sialic acid storage diseases.</title>
        <authorList>
            <person name="Verheijen F.W."/>
            <person name="Verbeek E."/>
            <person name="Aula N."/>
            <person name="Beerens C.E.M.T."/>
            <person name="Havelaar A.C."/>
            <person name="Joosse M."/>
            <person name="Peltonen L."/>
            <person name="Aula P."/>
            <person name="Galjaard H."/>
            <person name="Van der Spek P.J."/>
            <person name="Mancini G.M.S."/>
        </authorList>
    </citation>
    <scope>NUCLEOTIDE SEQUENCE [MRNA] (ISOFORM 1)</scope>
    <scope>TISSUE SPECIFICITY</scope>
    <scope>VARIANT SD CYS-39</scope>
    <scope>VARIANTS ISSD 268-SER--ASN-272 DEL; ARG-183 AND ARG-334</scope>
</reference>
<reference key="3">
    <citation type="journal article" date="2004" name="Nat. Genet.">
        <title>Complete sequencing and characterization of 21,243 full-length human cDNAs.</title>
        <authorList>
            <person name="Ota T."/>
            <person name="Suzuki Y."/>
            <person name="Nishikawa T."/>
            <person name="Otsuki T."/>
            <person name="Sugiyama T."/>
            <person name="Irie R."/>
            <person name="Wakamatsu A."/>
            <person name="Hayashi K."/>
            <person name="Sato H."/>
            <person name="Nagai K."/>
            <person name="Kimura K."/>
            <person name="Makita H."/>
            <person name="Sekine M."/>
            <person name="Obayashi M."/>
            <person name="Nishi T."/>
            <person name="Shibahara T."/>
            <person name="Tanaka T."/>
            <person name="Ishii S."/>
            <person name="Yamamoto J."/>
            <person name="Saito K."/>
            <person name="Kawai Y."/>
            <person name="Isono Y."/>
            <person name="Nakamura Y."/>
            <person name="Nagahari K."/>
            <person name="Murakami K."/>
            <person name="Yasuda T."/>
            <person name="Iwayanagi T."/>
            <person name="Wagatsuma M."/>
            <person name="Shiratori A."/>
            <person name="Sudo H."/>
            <person name="Hosoiri T."/>
            <person name="Kaku Y."/>
            <person name="Kodaira H."/>
            <person name="Kondo H."/>
            <person name="Sugawara M."/>
            <person name="Takahashi M."/>
            <person name="Kanda K."/>
            <person name="Yokoi T."/>
            <person name="Furuya T."/>
            <person name="Kikkawa E."/>
            <person name="Omura Y."/>
            <person name="Abe K."/>
            <person name="Kamihara K."/>
            <person name="Katsuta N."/>
            <person name="Sato K."/>
            <person name="Tanikawa M."/>
            <person name="Yamazaki M."/>
            <person name="Ninomiya K."/>
            <person name="Ishibashi T."/>
            <person name="Yamashita H."/>
            <person name="Murakawa K."/>
            <person name="Fujimori K."/>
            <person name="Tanai H."/>
            <person name="Kimata M."/>
            <person name="Watanabe M."/>
            <person name="Hiraoka S."/>
            <person name="Chiba Y."/>
            <person name="Ishida S."/>
            <person name="Ono Y."/>
            <person name="Takiguchi S."/>
            <person name="Watanabe S."/>
            <person name="Yosida M."/>
            <person name="Hotuta T."/>
            <person name="Kusano J."/>
            <person name="Kanehori K."/>
            <person name="Takahashi-Fujii A."/>
            <person name="Hara H."/>
            <person name="Tanase T.-O."/>
            <person name="Nomura Y."/>
            <person name="Togiya S."/>
            <person name="Komai F."/>
            <person name="Hara R."/>
            <person name="Takeuchi K."/>
            <person name="Arita M."/>
            <person name="Imose N."/>
            <person name="Musashino K."/>
            <person name="Yuuki H."/>
            <person name="Oshima A."/>
            <person name="Sasaki N."/>
            <person name="Aotsuka S."/>
            <person name="Yoshikawa Y."/>
            <person name="Matsunawa H."/>
            <person name="Ichihara T."/>
            <person name="Shiohata N."/>
            <person name="Sano S."/>
            <person name="Moriya S."/>
            <person name="Momiyama H."/>
            <person name="Satoh N."/>
            <person name="Takami S."/>
            <person name="Terashima Y."/>
            <person name="Suzuki O."/>
            <person name="Nakagawa S."/>
            <person name="Senoh A."/>
            <person name="Mizoguchi H."/>
            <person name="Goto Y."/>
            <person name="Shimizu F."/>
            <person name="Wakebe H."/>
            <person name="Hishigaki H."/>
            <person name="Watanabe T."/>
            <person name="Sugiyama A."/>
            <person name="Takemoto M."/>
            <person name="Kawakami B."/>
            <person name="Yamazaki M."/>
            <person name="Watanabe K."/>
            <person name="Kumagai A."/>
            <person name="Itakura S."/>
            <person name="Fukuzumi Y."/>
            <person name="Fujimori Y."/>
            <person name="Komiyama M."/>
            <person name="Tashiro H."/>
            <person name="Tanigami A."/>
            <person name="Fujiwara T."/>
            <person name="Ono T."/>
            <person name="Yamada K."/>
            <person name="Fujii Y."/>
            <person name="Ozaki K."/>
            <person name="Hirao M."/>
            <person name="Ohmori Y."/>
            <person name="Kawabata A."/>
            <person name="Hikiji T."/>
            <person name="Kobatake N."/>
            <person name="Inagaki H."/>
            <person name="Ikema Y."/>
            <person name="Okamoto S."/>
            <person name="Okitani R."/>
            <person name="Kawakami T."/>
            <person name="Noguchi S."/>
            <person name="Itoh T."/>
            <person name="Shigeta K."/>
            <person name="Senba T."/>
            <person name="Matsumura K."/>
            <person name="Nakajima Y."/>
            <person name="Mizuno T."/>
            <person name="Morinaga M."/>
            <person name="Sasaki M."/>
            <person name="Togashi T."/>
            <person name="Oyama M."/>
            <person name="Hata H."/>
            <person name="Watanabe M."/>
            <person name="Komatsu T."/>
            <person name="Mizushima-Sugano J."/>
            <person name="Satoh T."/>
            <person name="Shirai Y."/>
            <person name="Takahashi Y."/>
            <person name="Nakagawa K."/>
            <person name="Okumura K."/>
            <person name="Nagase T."/>
            <person name="Nomura N."/>
            <person name="Kikuchi H."/>
            <person name="Masuho Y."/>
            <person name="Yamashita R."/>
            <person name="Nakai K."/>
            <person name="Yada T."/>
            <person name="Nakamura Y."/>
            <person name="Ohara O."/>
            <person name="Isogai T."/>
            <person name="Sugano S."/>
        </authorList>
    </citation>
    <scope>NUCLEOTIDE SEQUENCE [LARGE SCALE MRNA] (ISOFORM 2)</scope>
</reference>
<reference key="4">
    <citation type="journal article" date="2003" name="Nature">
        <title>The DNA sequence and analysis of human chromosome 6.</title>
        <authorList>
            <person name="Mungall A.J."/>
            <person name="Palmer S.A."/>
            <person name="Sims S.K."/>
            <person name="Edwards C.A."/>
            <person name="Ashurst J.L."/>
            <person name="Wilming L."/>
            <person name="Jones M.C."/>
            <person name="Horton R."/>
            <person name="Hunt S.E."/>
            <person name="Scott C.E."/>
            <person name="Gilbert J.G.R."/>
            <person name="Clamp M.E."/>
            <person name="Bethel G."/>
            <person name="Milne S."/>
            <person name="Ainscough R."/>
            <person name="Almeida J.P."/>
            <person name="Ambrose K.D."/>
            <person name="Andrews T.D."/>
            <person name="Ashwell R.I.S."/>
            <person name="Babbage A.K."/>
            <person name="Bagguley C.L."/>
            <person name="Bailey J."/>
            <person name="Banerjee R."/>
            <person name="Barker D.J."/>
            <person name="Barlow K.F."/>
            <person name="Bates K."/>
            <person name="Beare D.M."/>
            <person name="Beasley H."/>
            <person name="Beasley O."/>
            <person name="Bird C.P."/>
            <person name="Blakey S.E."/>
            <person name="Bray-Allen S."/>
            <person name="Brook J."/>
            <person name="Brown A.J."/>
            <person name="Brown J.Y."/>
            <person name="Burford D.C."/>
            <person name="Burrill W."/>
            <person name="Burton J."/>
            <person name="Carder C."/>
            <person name="Carter N.P."/>
            <person name="Chapman J.C."/>
            <person name="Clark S.Y."/>
            <person name="Clark G."/>
            <person name="Clee C.M."/>
            <person name="Clegg S."/>
            <person name="Cobley V."/>
            <person name="Collier R.E."/>
            <person name="Collins J.E."/>
            <person name="Colman L.K."/>
            <person name="Corby N.R."/>
            <person name="Coville G.J."/>
            <person name="Culley K.M."/>
            <person name="Dhami P."/>
            <person name="Davies J."/>
            <person name="Dunn M."/>
            <person name="Earthrowl M.E."/>
            <person name="Ellington A.E."/>
            <person name="Evans K.A."/>
            <person name="Faulkner L."/>
            <person name="Francis M.D."/>
            <person name="Frankish A."/>
            <person name="Frankland J."/>
            <person name="French L."/>
            <person name="Garner P."/>
            <person name="Garnett J."/>
            <person name="Ghori M.J."/>
            <person name="Gilby L.M."/>
            <person name="Gillson C.J."/>
            <person name="Glithero R.J."/>
            <person name="Grafham D.V."/>
            <person name="Grant M."/>
            <person name="Gribble S."/>
            <person name="Griffiths C."/>
            <person name="Griffiths M.N.D."/>
            <person name="Hall R."/>
            <person name="Halls K.S."/>
            <person name="Hammond S."/>
            <person name="Harley J.L."/>
            <person name="Hart E.A."/>
            <person name="Heath P.D."/>
            <person name="Heathcott R."/>
            <person name="Holmes S.J."/>
            <person name="Howden P.J."/>
            <person name="Howe K.L."/>
            <person name="Howell G.R."/>
            <person name="Huckle E."/>
            <person name="Humphray S.J."/>
            <person name="Humphries M.D."/>
            <person name="Hunt A.R."/>
            <person name="Johnson C.M."/>
            <person name="Joy A.A."/>
            <person name="Kay M."/>
            <person name="Keenan S.J."/>
            <person name="Kimberley A.M."/>
            <person name="King A."/>
            <person name="Laird G.K."/>
            <person name="Langford C."/>
            <person name="Lawlor S."/>
            <person name="Leongamornlert D.A."/>
            <person name="Leversha M."/>
            <person name="Lloyd C.R."/>
            <person name="Lloyd D.M."/>
            <person name="Loveland J.E."/>
            <person name="Lovell J."/>
            <person name="Martin S."/>
            <person name="Mashreghi-Mohammadi M."/>
            <person name="Maslen G.L."/>
            <person name="Matthews L."/>
            <person name="McCann O.T."/>
            <person name="McLaren S.J."/>
            <person name="McLay K."/>
            <person name="McMurray A."/>
            <person name="Moore M.J.F."/>
            <person name="Mullikin J.C."/>
            <person name="Niblett D."/>
            <person name="Nickerson T."/>
            <person name="Novik K.L."/>
            <person name="Oliver K."/>
            <person name="Overton-Larty E.K."/>
            <person name="Parker A."/>
            <person name="Patel R."/>
            <person name="Pearce A.V."/>
            <person name="Peck A.I."/>
            <person name="Phillimore B.J.C.T."/>
            <person name="Phillips S."/>
            <person name="Plumb R.W."/>
            <person name="Porter K.M."/>
            <person name="Ramsey Y."/>
            <person name="Ranby S.A."/>
            <person name="Rice C.M."/>
            <person name="Ross M.T."/>
            <person name="Searle S.M."/>
            <person name="Sehra H.K."/>
            <person name="Sheridan E."/>
            <person name="Skuce C.D."/>
            <person name="Smith S."/>
            <person name="Smith M."/>
            <person name="Spraggon L."/>
            <person name="Squares S.L."/>
            <person name="Steward C.A."/>
            <person name="Sycamore N."/>
            <person name="Tamlyn-Hall G."/>
            <person name="Tester J."/>
            <person name="Theaker A.J."/>
            <person name="Thomas D.W."/>
            <person name="Thorpe A."/>
            <person name="Tracey A."/>
            <person name="Tromans A."/>
            <person name="Tubby B."/>
            <person name="Wall M."/>
            <person name="Wallis J.M."/>
            <person name="West A.P."/>
            <person name="White S.S."/>
            <person name="Whitehead S.L."/>
            <person name="Whittaker H."/>
            <person name="Wild A."/>
            <person name="Willey D.J."/>
            <person name="Wilmer T.E."/>
            <person name="Wood J.M."/>
            <person name="Wray P.W."/>
            <person name="Wyatt J.C."/>
            <person name="Young L."/>
            <person name="Younger R.M."/>
            <person name="Bentley D.R."/>
            <person name="Coulson A."/>
            <person name="Durbin R.M."/>
            <person name="Hubbard T."/>
            <person name="Sulston J.E."/>
            <person name="Dunham I."/>
            <person name="Rogers J."/>
            <person name="Beck S."/>
        </authorList>
    </citation>
    <scope>NUCLEOTIDE SEQUENCE [LARGE SCALE GENOMIC DNA]</scope>
</reference>
<reference key="5">
    <citation type="journal article" date="2004" name="Genome Res.">
        <title>The status, quality, and expansion of the NIH full-length cDNA project: the Mammalian Gene Collection (MGC).</title>
        <authorList>
            <consortium name="The MGC Project Team"/>
        </authorList>
    </citation>
    <scope>NUCLEOTIDE SEQUENCE [LARGE SCALE MRNA] (ISOFORM 2)</scope>
    <source>
        <tissue>Colon</tissue>
    </source>
</reference>
<reference key="6">
    <citation type="journal article" date="2004" name="EMBO J.">
        <title>Functional characterization of wild-type and mutant human sialin.</title>
        <authorList>
            <person name="Morin P."/>
            <person name="Sagne C."/>
            <person name="Gasnier B."/>
        </authorList>
    </citation>
    <scope>FUNCTION</scope>
    <scope>TRANSPORT ACTIVITY</scope>
    <scope>BIOPHYSICOCHEMICAL PROPERTIES</scope>
    <scope>SUBCELLULAR LOCATION</scope>
    <scope>DILEUCINE MOTIF</scope>
    <scope>MUTAGENESIS OF 22-LEU-LEU-23; 198-LEU-LEU-199 AND 266-ILE-LEU-267</scope>
    <scope>CHARACTERIZATION OF VARIANTS SD CYS-39 AND GLU-136</scope>
    <scope>CHARACTERIZATION OF VARIANTS ISSD ARG-183; 268-SER--ASN-272 DEL AND ARG-334</scope>
</reference>
<reference key="7">
    <citation type="journal article" date="2007" name="Traffic">
        <title>Integral and associated lysosomal membrane proteins.</title>
        <authorList>
            <person name="Schroeder B."/>
            <person name="Wrocklage C."/>
            <person name="Pan C."/>
            <person name="Jaeger R."/>
            <person name="Koesters B."/>
            <person name="Schaefer H."/>
            <person name="Elsaesser H.-P."/>
            <person name="Mann M."/>
            <person name="Hasilik A."/>
        </authorList>
    </citation>
    <scope>SUBCELLULAR LOCATION [LARGE SCALE ANALYSIS]</scope>
    <source>
        <tissue>Placenta</tissue>
    </source>
</reference>
<reference key="8">
    <citation type="journal article" date="2010" name="J. Biol. Chem.">
        <title>Structure-function studies of the SLC17 transporter sialin identify crucial residues and substrate-induced conformational changes.</title>
        <authorList>
            <person name="Courville P."/>
            <person name="Quick M."/>
            <person name="Reimer R.J."/>
        </authorList>
    </citation>
    <scope>TOPOLOGY</scope>
</reference>
<reference key="9">
    <citation type="journal article" date="2011" name="J. Neurochem.">
        <title>Functional characterization of vesicular excitatory amino acid transport by human sialin.</title>
        <authorList>
            <person name="Miyaji T."/>
            <person name="Omote H."/>
            <person name="Moriyama Y."/>
        </authorList>
    </citation>
    <scope>FUNCTION</scope>
    <scope>TRANSPORT ACTIVITY</scope>
    <scope>BIOPHYSICOCHEMICAL PROPERTIES</scope>
    <scope>SUBCELLULAR LOCATION</scope>
    <scope>CHARACTERIZATION OF VARIANTS SD CYS-39 AND GLU-136</scope>
    <scope>CHARACTERIZATION OF VARIANTS ISSD ARG-183; 268-SER--ASN-272 DEL; GLU-328; ARG-334 AND VAL-371</scope>
</reference>
<reference key="10">
    <citation type="journal article" date="2012" name="Proc. Natl. Acad. Sci. U.S.A.">
        <title>Sialin (SLC17A5) functions as a nitrate transporter in the plasma membrane.</title>
        <authorList>
            <person name="Qin L."/>
            <person name="Liu X."/>
            <person name="Sun Q."/>
            <person name="Fan Z."/>
            <person name="Xia D."/>
            <person name="Ding G."/>
            <person name="Ong H.L."/>
            <person name="Adams D."/>
            <person name="Gahl W.A."/>
            <person name="Zheng C."/>
            <person name="Qi S."/>
            <person name="Jin L."/>
            <person name="Zhang C."/>
            <person name="Gu L."/>
            <person name="He J."/>
            <person name="Deng D."/>
            <person name="Ambudkar I.S."/>
            <person name="Wang S."/>
        </authorList>
    </citation>
    <scope>FUNCTION</scope>
    <scope>TRANSPORT ACTIVITY</scope>
    <scope>SUBCELLULAR LOCATION</scope>
    <scope>TISSUE SPECIFICITY</scope>
    <scope>MUTAGENESIS OF 22-LEU-LEU-23</scope>
    <scope>CHARACTERIZATION OF VARIANT SD CYS-39</scope>
    <scope>CHARACTERIZATION OF VARIANT ISSD ARG-183</scope>
</reference>
<reference key="11">
    <citation type="journal article" date="2013" name="Biochem. J.">
        <title>Vesicular uptake of N-acetylaspartylglutamate is catalysed by sialin (SLC17A5).</title>
        <authorList>
            <person name="Lodder-Gadaczek J."/>
            <person name="Gieselmann V."/>
            <person name="Eckhardt M."/>
        </authorList>
    </citation>
    <scope>FUNCTION</scope>
    <scope>TRANSPORT ACTIVITY</scope>
    <scope>BIOPHYSICOCHEMICAL PROPERTIES</scope>
    <scope>MUTAGENESIS OF 22-LEU-LEU-23</scope>
</reference>
<reference key="12">
    <citation type="journal article" date="2013" name="J. Proteome Res.">
        <title>Toward a comprehensive characterization of a human cancer cell phosphoproteome.</title>
        <authorList>
            <person name="Zhou H."/>
            <person name="Di Palma S."/>
            <person name="Preisinger C."/>
            <person name="Peng M."/>
            <person name="Polat A.N."/>
            <person name="Heck A.J."/>
            <person name="Mohammed S."/>
        </authorList>
    </citation>
    <scope>PHOSPHORYLATION [LARGE SCALE ANALYSIS] AT SER-3</scope>
    <scope>IDENTIFICATION BY MASS SPECTROMETRY [LARGE SCALE ANALYSIS]</scope>
    <source>
        <tissue>Erythroleukemia</tissue>
    </source>
</reference>
<reference key="13">
    <citation type="journal article" date="2000" name="Am. J. Hum. Genet.">
        <title>The spectrum of SLC17A5-gene mutations resulting in free sialic acid-storage diseases indicates some genotype-phenotype correlation.</title>
        <authorList>
            <person name="Aula N."/>
            <person name="Salomaeki P."/>
            <person name="Timonen R."/>
            <person name="Verheijen F."/>
            <person name="Mancini G.M.S."/>
            <person name="Maensson J.-E."/>
            <person name="Aula P."/>
            <person name="Peltonen L."/>
        </authorList>
    </citation>
    <scope>VARIANTS SD CYS-39 AND GLU-136</scope>
    <scope>VARIANTS ISSD 268-SER--ASN-272 DEL; ARG-183; ARG-334 AND VAL-371</scope>
</reference>
<reference key="14">
    <citation type="journal article" date="2003" name="Am. J. Med. Genet. A">
        <title>Sialic acid storage disease of the Salla phenotype in American monozygous twin female sibs.</title>
        <authorList>
            <person name="Martin R.A."/>
            <person name="Slaugh R."/>
            <person name="Natowicz M."/>
            <person name="Pearlman K."/>
            <person name="Orvisky E."/>
            <person name="Krasnewich D."/>
            <person name="Kleta R."/>
            <person name="Huizing M."/>
            <person name="Gahl W.A."/>
        </authorList>
    </citation>
    <scope>VARIANT SD CYS-39</scope>
</reference>
<reference key="15">
    <citation type="journal article" date="2004" name="Mol. Genet. Metab.">
        <title>A novel mutation in the SLC17A5 gene causing both severe and mild phenotypes of free sialic acid storage disease in one inbred Bedouin kindred.</title>
        <authorList>
            <person name="Landau D."/>
            <person name="Cohen D."/>
            <person name="Shalev H."/>
            <person name="Pinsk V."/>
            <person name="Yerushalmi B."/>
            <person name="Zeigler M."/>
            <person name="Birk O.S."/>
        </authorList>
    </citation>
    <scope>VARIANT ISSD GLU-328</scope>
</reference>
<proteinExistence type="evidence at protein level"/>
<name>S17A5_HUMAN</name>
<gene>
    <name type="primary">SLC17A5</name>
</gene>
<keyword id="KW-0002">3D-structure</keyword>
<keyword id="KW-0025">Alternative splicing</keyword>
<keyword id="KW-0029">Amino-acid transport</keyword>
<keyword id="KW-1003">Cell membrane</keyword>
<keyword id="KW-0968">Cytoplasmic vesicle</keyword>
<keyword id="KW-0225">Disease variant</keyword>
<keyword id="KW-0325">Glycoprotein</keyword>
<keyword id="KW-0458">Lysosome</keyword>
<keyword id="KW-0472">Membrane</keyword>
<keyword id="KW-0597">Phosphoprotein</keyword>
<keyword id="KW-1267">Proteomics identification</keyword>
<keyword id="KW-1185">Reference proteome</keyword>
<keyword id="KW-0769">Symport</keyword>
<keyword id="KW-0770">Synapse</keyword>
<keyword id="KW-0812">Transmembrane</keyword>
<keyword id="KW-1133">Transmembrane helix</keyword>
<keyword id="KW-0813">Transport</keyword>
<dbReference type="EMBL" id="AF244577">
    <property type="protein sequence ID" value="AAF97769.1"/>
    <property type="status" value="ALT_INIT"/>
    <property type="molecule type" value="mRNA"/>
</dbReference>
<dbReference type="EMBL" id="AJ387747">
    <property type="protein sequence ID" value="CAB62540.1"/>
    <property type="molecule type" value="mRNA"/>
</dbReference>
<dbReference type="EMBL" id="AK075320">
    <property type="protein sequence ID" value="BAC11546.1"/>
    <property type="molecule type" value="mRNA"/>
</dbReference>
<dbReference type="EMBL" id="AL121972">
    <property type="status" value="NOT_ANNOTATED_CDS"/>
    <property type="molecule type" value="Genomic_DNA"/>
</dbReference>
<dbReference type="EMBL" id="AL590428">
    <property type="status" value="NOT_ANNOTATED_CDS"/>
    <property type="molecule type" value="Genomic_DNA"/>
</dbReference>
<dbReference type="EMBL" id="BC020961">
    <property type="protein sequence ID" value="AAH20961.1"/>
    <property type="molecule type" value="mRNA"/>
</dbReference>
<dbReference type="CCDS" id="CCDS4981.1">
    <molecule id="Q9NRA2-1"/>
</dbReference>
<dbReference type="RefSeq" id="NP_036566.1">
    <molecule id="Q9NRA2-1"/>
    <property type="nucleotide sequence ID" value="NM_012434.5"/>
</dbReference>
<dbReference type="PDB" id="8DWI">
    <property type="method" value="EM"/>
    <property type="resolution" value="3.40 A"/>
    <property type="chains" value="A=1-495"/>
</dbReference>
<dbReference type="PDB" id="8U3D">
    <property type="method" value="EM"/>
    <property type="resolution" value="2.83 A"/>
    <property type="chains" value="A=2-495"/>
</dbReference>
<dbReference type="PDB" id="8U3E">
    <property type="method" value="EM"/>
    <property type="resolution" value="3.19 A"/>
    <property type="chains" value="A=2-495"/>
</dbReference>
<dbReference type="PDB" id="8U3F">
    <property type="method" value="EM"/>
    <property type="resolution" value="3.31 A"/>
    <property type="chains" value="A=2-495"/>
</dbReference>
<dbReference type="PDB" id="8U3G">
    <property type="method" value="EM"/>
    <property type="resolution" value="3.42 A"/>
    <property type="chains" value="A=2-495"/>
</dbReference>
<dbReference type="PDB" id="8U3H">
    <property type="method" value="EM"/>
    <property type="resolution" value="3.67 A"/>
    <property type="chains" value="A=2-495"/>
</dbReference>
<dbReference type="PDB" id="9AYB">
    <property type="method" value="EM"/>
    <property type="resolution" value="3.19 A"/>
    <property type="chains" value="A=2-495"/>
</dbReference>
<dbReference type="PDBsum" id="8DWI"/>
<dbReference type="PDBsum" id="8U3D"/>
<dbReference type="PDBsum" id="8U3E"/>
<dbReference type="PDBsum" id="8U3F"/>
<dbReference type="PDBsum" id="8U3G"/>
<dbReference type="PDBsum" id="8U3H"/>
<dbReference type="PDBsum" id="9AYB"/>
<dbReference type="EMDB" id="EMD-27755"/>
<dbReference type="EMDB" id="EMD-41858"/>
<dbReference type="EMDB" id="EMD-41859"/>
<dbReference type="EMDB" id="EMD-41860"/>
<dbReference type="EMDB" id="EMD-41861"/>
<dbReference type="EMDB" id="EMD-41862"/>
<dbReference type="EMDB" id="EMD-43984"/>
<dbReference type="SMR" id="Q9NRA2"/>
<dbReference type="BioGRID" id="117710">
    <property type="interactions" value="8"/>
</dbReference>
<dbReference type="FunCoup" id="Q9NRA2">
    <property type="interactions" value="701"/>
</dbReference>
<dbReference type="IntAct" id="Q9NRA2">
    <property type="interactions" value="4"/>
</dbReference>
<dbReference type="STRING" id="9606.ENSP00000348019"/>
<dbReference type="BindingDB" id="Q9NRA2"/>
<dbReference type="ChEMBL" id="CHEMBL4630859"/>
<dbReference type="TCDB" id="2.A.1.14.10">
    <property type="family name" value="the major facilitator superfamily (mfs)"/>
</dbReference>
<dbReference type="GlyCosmos" id="Q9NRA2">
    <property type="glycosylation" value="3 sites, No reported glycans"/>
</dbReference>
<dbReference type="GlyGen" id="Q9NRA2">
    <property type="glycosylation" value="3 sites"/>
</dbReference>
<dbReference type="iPTMnet" id="Q9NRA2"/>
<dbReference type="PhosphoSitePlus" id="Q9NRA2"/>
<dbReference type="SwissPalm" id="Q9NRA2"/>
<dbReference type="BioMuta" id="SLC17A5"/>
<dbReference type="DMDM" id="48428688"/>
<dbReference type="jPOST" id="Q9NRA2"/>
<dbReference type="MassIVE" id="Q9NRA2"/>
<dbReference type="PaxDb" id="9606-ENSP00000348019"/>
<dbReference type="PeptideAtlas" id="Q9NRA2"/>
<dbReference type="ProteomicsDB" id="82321">
    <molecule id="Q9NRA2-1"/>
</dbReference>
<dbReference type="ProteomicsDB" id="82322">
    <molecule id="Q9NRA2-2"/>
</dbReference>
<dbReference type="Antibodypedia" id="31449">
    <property type="antibodies" value="110 antibodies from 26 providers"/>
</dbReference>
<dbReference type="DNASU" id="26503"/>
<dbReference type="Ensembl" id="ENST00000355773.6">
    <molecule id="Q9NRA2-1"/>
    <property type="protein sequence ID" value="ENSP00000348019.5"/>
    <property type="gene ID" value="ENSG00000119899.13"/>
</dbReference>
<dbReference type="GeneID" id="26503"/>
<dbReference type="KEGG" id="hsa:26503"/>
<dbReference type="MANE-Select" id="ENST00000355773.6">
    <property type="protein sequence ID" value="ENSP00000348019.5"/>
    <property type="RefSeq nucleotide sequence ID" value="NM_012434.5"/>
    <property type="RefSeq protein sequence ID" value="NP_036566.1"/>
</dbReference>
<dbReference type="UCSC" id="uc003phn.5">
    <molecule id="Q9NRA2-1"/>
    <property type="organism name" value="human"/>
</dbReference>
<dbReference type="AGR" id="HGNC:10933"/>
<dbReference type="CTD" id="26503"/>
<dbReference type="DisGeNET" id="26503"/>
<dbReference type="GeneCards" id="SLC17A5"/>
<dbReference type="GeneReviews" id="SLC17A5"/>
<dbReference type="HGNC" id="HGNC:10933">
    <property type="gene designation" value="SLC17A5"/>
</dbReference>
<dbReference type="HPA" id="ENSG00000119899">
    <property type="expression patterns" value="Tissue enriched (parathyroid)"/>
</dbReference>
<dbReference type="MalaCards" id="SLC17A5"/>
<dbReference type="MIM" id="269920">
    <property type="type" value="phenotype"/>
</dbReference>
<dbReference type="MIM" id="604322">
    <property type="type" value="gene"/>
</dbReference>
<dbReference type="MIM" id="604369">
    <property type="type" value="phenotype"/>
</dbReference>
<dbReference type="neXtProt" id="NX_Q9NRA2"/>
<dbReference type="OpenTargets" id="ENSG00000119899"/>
<dbReference type="Orphanet" id="309324">
    <property type="disease" value="Free sialic acid storage disease, infantile form"/>
</dbReference>
<dbReference type="Orphanet" id="309331">
    <property type="disease" value="Intermediate severe Salla disease"/>
</dbReference>
<dbReference type="Orphanet" id="309334">
    <property type="disease" value="Salla disease"/>
</dbReference>
<dbReference type="PharmGKB" id="PA35824"/>
<dbReference type="VEuPathDB" id="HostDB:ENSG00000119899"/>
<dbReference type="eggNOG" id="KOG2532">
    <property type="taxonomic scope" value="Eukaryota"/>
</dbReference>
<dbReference type="GeneTree" id="ENSGT00940000160370"/>
<dbReference type="HOGENOM" id="CLU_001265_5_0_1"/>
<dbReference type="InParanoid" id="Q9NRA2"/>
<dbReference type="OMA" id="RVVTTWF"/>
<dbReference type="OrthoDB" id="2985014at2759"/>
<dbReference type="PAN-GO" id="Q9NRA2">
    <property type="GO annotations" value="4 GO annotations based on evolutionary models"/>
</dbReference>
<dbReference type="PhylomeDB" id="Q9NRA2"/>
<dbReference type="TreeFam" id="TF313535"/>
<dbReference type="PathwayCommons" id="Q9NRA2"/>
<dbReference type="Reactome" id="R-HSA-4085001">
    <property type="pathway name" value="Sialic acid metabolism"/>
</dbReference>
<dbReference type="Reactome" id="R-HSA-428643">
    <property type="pathway name" value="Organic anion transporters"/>
</dbReference>
<dbReference type="Reactome" id="R-HSA-5619035">
    <property type="pathway name" value="Defective SLC17A5 causes Salla disease (SD) and ISSD"/>
</dbReference>
<dbReference type="SignaLink" id="Q9NRA2"/>
<dbReference type="BioGRID-ORCS" id="26503">
    <property type="hits" value="10 hits in 1149 CRISPR screens"/>
</dbReference>
<dbReference type="ChiTaRS" id="SLC17A5">
    <property type="organism name" value="human"/>
</dbReference>
<dbReference type="GeneWiki" id="HP59"/>
<dbReference type="GeneWiki" id="SLC17A5"/>
<dbReference type="GenomeRNAi" id="26503"/>
<dbReference type="Pharos" id="Q9NRA2">
    <property type="development level" value="Tbio"/>
</dbReference>
<dbReference type="PRO" id="PR:Q9NRA2"/>
<dbReference type="Proteomes" id="UP000005640">
    <property type="component" value="Chromosome 6"/>
</dbReference>
<dbReference type="RNAct" id="Q9NRA2">
    <property type="molecule type" value="protein"/>
</dbReference>
<dbReference type="Bgee" id="ENSG00000119899">
    <property type="expression patterns" value="Expressed in corpus epididymis and 188 other cell types or tissues"/>
</dbReference>
<dbReference type="GO" id="GO:0016324">
    <property type="term" value="C:apical plasma membrane"/>
    <property type="evidence" value="ECO:0000318"/>
    <property type="project" value="GO_Central"/>
</dbReference>
<dbReference type="GO" id="GO:0016323">
    <property type="term" value="C:basolateral plasma membrane"/>
    <property type="evidence" value="ECO:0007669"/>
    <property type="project" value="UniProtKB-SubCell"/>
</dbReference>
<dbReference type="GO" id="GO:0005829">
    <property type="term" value="C:cytosol"/>
    <property type="evidence" value="ECO:0000314"/>
    <property type="project" value="HPA"/>
</dbReference>
<dbReference type="GO" id="GO:0098978">
    <property type="term" value="C:glutamatergic synapse"/>
    <property type="evidence" value="ECO:0007669"/>
    <property type="project" value="Ensembl"/>
</dbReference>
<dbReference type="GO" id="GO:0005765">
    <property type="term" value="C:lysosomal membrane"/>
    <property type="evidence" value="ECO:0000314"/>
    <property type="project" value="MGI"/>
</dbReference>
<dbReference type="GO" id="GO:0005764">
    <property type="term" value="C:lysosome"/>
    <property type="evidence" value="ECO:0000318"/>
    <property type="project" value="GO_Central"/>
</dbReference>
<dbReference type="GO" id="GO:0016020">
    <property type="term" value="C:membrane"/>
    <property type="evidence" value="ECO:0000304"/>
    <property type="project" value="ProtInc"/>
</dbReference>
<dbReference type="GO" id="GO:0005886">
    <property type="term" value="C:plasma membrane"/>
    <property type="evidence" value="ECO:0000314"/>
    <property type="project" value="HPA"/>
</dbReference>
<dbReference type="GO" id="GO:0030672">
    <property type="term" value="C:synaptic vesicle membrane"/>
    <property type="evidence" value="ECO:0007669"/>
    <property type="project" value="UniProtKB-SubCell"/>
</dbReference>
<dbReference type="GO" id="GO:0005351">
    <property type="term" value="F:carbohydrate:proton symporter activity"/>
    <property type="evidence" value="ECO:0000304"/>
    <property type="project" value="ProtInc"/>
</dbReference>
<dbReference type="GO" id="GO:0042880">
    <property type="term" value="F:D-glucuronate transmembrane transporter activity"/>
    <property type="evidence" value="ECO:0007669"/>
    <property type="project" value="Ensembl"/>
</dbReference>
<dbReference type="GO" id="GO:0015136">
    <property type="term" value="F:sialic acid transmembrane transporter activity"/>
    <property type="evidence" value="ECO:0000314"/>
    <property type="project" value="MGI"/>
</dbReference>
<dbReference type="GO" id="GO:0015538">
    <property type="term" value="F:sialic acid:proton symporter activity"/>
    <property type="evidence" value="ECO:0000304"/>
    <property type="project" value="Reactome"/>
</dbReference>
<dbReference type="GO" id="GO:0006865">
    <property type="term" value="P:amino acid transport"/>
    <property type="evidence" value="ECO:0007669"/>
    <property type="project" value="UniProtKB-KW"/>
</dbReference>
<dbReference type="GO" id="GO:0006820">
    <property type="term" value="P:monoatomic anion transport"/>
    <property type="evidence" value="ECO:0000304"/>
    <property type="project" value="ProtInc"/>
</dbReference>
<dbReference type="GO" id="GO:0006811">
    <property type="term" value="P:monoatomic ion transport"/>
    <property type="evidence" value="ECO:0000304"/>
    <property type="project" value="Reactome"/>
</dbReference>
<dbReference type="GO" id="GO:0098700">
    <property type="term" value="P:neurotransmitter loading into synaptic vesicle"/>
    <property type="evidence" value="ECO:0007669"/>
    <property type="project" value="Ensembl"/>
</dbReference>
<dbReference type="GO" id="GO:0009617">
    <property type="term" value="P:response to bacterium"/>
    <property type="evidence" value="ECO:0007669"/>
    <property type="project" value="Ensembl"/>
</dbReference>
<dbReference type="GO" id="GO:0015739">
    <property type="term" value="P:sialic acid transport"/>
    <property type="evidence" value="ECO:0000314"/>
    <property type="project" value="MGI"/>
</dbReference>
<dbReference type="CDD" id="cd17381">
    <property type="entry name" value="MFS_SLC17A5"/>
    <property type="match status" value="1"/>
</dbReference>
<dbReference type="FunFam" id="1.20.1250.20:FF:000067">
    <property type="entry name" value="sialin isoform X2"/>
    <property type="match status" value="1"/>
</dbReference>
<dbReference type="FunFam" id="1.20.1250.20:FF:000003">
    <property type="entry name" value="Solute carrier family 17 member 3"/>
    <property type="match status" value="1"/>
</dbReference>
<dbReference type="Gene3D" id="1.20.1250.20">
    <property type="entry name" value="MFS general substrate transporter like domains"/>
    <property type="match status" value="2"/>
</dbReference>
<dbReference type="InterPro" id="IPR011701">
    <property type="entry name" value="MFS"/>
</dbReference>
<dbReference type="InterPro" id="IPR020846">
    <property type="entry name" value="MFS_dom"/>
</dbReference>
<dbReference type="InterPro" id="IPR050382">
    <property type="entry name" value="MFS_Na/Anion_cotransporter"/>
</dbReference>
<dbReference type="InterPro" id="IPR036259">
    <property type="entry name" value="MFS_trans_sf"/>
</dbReference>
<dbReference type="PANTHER" id="PTHR11662:SF432">
    <property type="entry name" value="SIALIN"/>
    <property type="match status" value="1"/>
</dbReference>
<dbReference type="PANTHER" id="PTHR11662">
    <property type="entry name" value="SOLUTE CARRIER FAMILY 17"/>
    <property type="match status" value="1"/>
</dbReference>
<dbReference type="Pfam" id="PF07690">
    <property type="entry name" value="MFS_1"/>
    <property type="match status" value="1"/>
</dbReference>
<dbReference type="SUPFAM" id="SSF103473">
    <property type="entry name" value="MFS general substrate transporter"/>
    <property type="match status" value="1"/>
</dbReference>
<dbReference type="PROSITE" id="PS50850">
    <property type="entry name" value="MFS"/>
    <property type="match status" value="1"/>
</dbReference>
<organism>
    <name type="scientific">Homo sapiens</name>
    <name type="common">Human</name>
    <dbReference type="NCBI Taxonomy" id="9606"/>
    <lineage>
        <taxon>Eukaryota</taxon>
        <taxon>Metazoa</taxon>
        <taxon>Chordata</taxon>
        <taxon>Craniata</taxon>
        <taxon>Vertebrata</taxon>
        <taxon>Euteleostomi</taxon>
        <taxon>Mammalia</taxon>
        <taxon>Eutheria</taxon>
        <taxon>Euarchontoglires</taxon>
        <taxon>Primates</taxon>
        <taxon>Haplorrhini</taxon>
        <taxon>Catarrhini</taxon>
        <taxon>Hominidae</taxon>
        <taxon>Homo</taxon>
    </lineage>
</organism>
<evidence type="ECO:0000250" key="1">
    <source>
        <dbReference type="UniProtKB" id="Q5Q0U0"/>
    </source>
</evidence>
<evidence type="ECO:0000250" key="2">
    <source>
        <dbReference type="UniProtKB" id="Q8BN82"/>
    </source>
</evidence>
<evidence type="ECO:0000250" key="3">
    <source>
        <dbReference type="UniProtKB" id="Q9MZD1"/>
    </source>
</evidence>
<evidence type="ECO:0000255" key="4"/>
<evidence type="ECO:0000256" key="5">
    <source>
        <dbReference type="SAM" id="MobiDB-lite"/>
    </source>
</evidence>
<evidence type="ECO:0000269" key="6">
    <source>
    </source>
</evidence>
<evidence type="ECO:0000269" key="7">
    <source>
    </source>
</evidence>
<evidence type="ECO:0000269" key="8">
    <source>
    </source>
</evidence>
<evidence type="ECO:0000269" key="9">
    <source>
    </source>
</evidence>
<evidence type="ECO:0000269" key="10">
    <source>
    </source>
</evidence>
<evidence type="ECO:0000269" key="11">
    <source>
    </source>
</evidence>
<evidence type="ECO:0000269" key="12">
    <source>
    </source>
</evidence>
<evidence type="ECO:0000269" key="13">
    <source>
    </source>
</evidence>
<evidence type="ECO:0000269" key="14">
    <source>
    </source>
</evidence>
<evidence type="ECO:0000269" key="15">
    <source>
    </source>
</evidence>
<evidence type="ECO:0000303" key="16">
    <source>
    </source>
</evidence>
<evidence type="ECO:0000303" key="17">
    <source>
    </source>
</evidence>
<evidence type="ECO:0000303" key="18">
    <source>
    </source>
</evidence>
<evidence type="ECO:0000305" key="19"/>
<evidence type="ECO:0000305" key="20">
    <source>
    </source>
</evidence>
<evidence type="ECO:0000305" key="21">
    <source>
    </source>
</evidence>
<evidence type="ECO:0000305" key="22">
    <source>
    </source>
</evidence>
<evidence type="ECO:0000305" key="23">
    <source>
    </source>
</evidence>
<evidence type="ECO:0007744" key="24">
    <source>
    </source>
</evidence>
<evidence type="ECO:0007829" key="25">
    <source>
        <dbReference type="PDB" id="8DWI"/>
    </source>
</evidence>
<evidence type="ECO:0007829" key="26">
    <source>
        <dbReference type="PDB" id="8U3D"/>
    </source>
</evidence>
<evidence type="ECO:0007829" key="27">
    <source>
        <dbReference type="PDB" id="8U3E"/>
    </source>
</evidence>
<evidence type="ECO:0007829" key="28">
    <source>
        <dbReference type="PDB" id="9AYB"/>
    </source>
</evidence>
<sequence length="495" mass="54640">MRSPVRDLARNDGEESTDRTPLLPGAPRAEAAPVCCSARYNLAILAFFGFFIVYALRVNLSVALVDMVDSNTTLEDNRTSKACPEHSAPIKVHHNQTGKKYQWDAETQGWILGSFFYGYIITQIPGGYVASKIGGKMLLGFGILGTAVLTLFTPIAADLGVGPLIVLRALEGLGEGVTFPAMHAMWSSWAPPLERSKLLSISYAGAQLGTVISLPLSGIICYYMNWTYVFYFFGTIGIFWFLLWIWLVSDTPQKHKRISHYEKEYILSSLRNQLSSQKSVPWVPILKSLPLWAIVVAHFSYNWTFYTLLTLLPTYMKEILRFNVQENGFLSSLPYLGSWLCMILSGQAADNLRAKWNFSTLCVRRIFSLIGMIGPAVFLVAAGFIGCDYSLAVAFLTISTTLGGFCSSGFSINHLDIAPSYAGILLGITNTFATIPGMVGPVIAKSLTPDNTVGEWQTVFYIAAAINVFGAIFFTLFAKGEVQNWALNDHHGHRH</sequence>
<comment type="function">
    <text evidence="1 2 11 13 14 15">Multifunctional anion transporter that operates via two distinct transport mechanisms, namely proton-coupled anion cotransport and membrane potential-dependent anion transport (PubMed:15510212, PubMed:21781115, PubMed:22778404, PubMed:23889254). Electroneutral proton-coupled acidic monosaccharide symporter, with a sugar to proton stoichiometry of 1:1. Exports glucuronic acid and free sialic acid derived from sialoglycoconjugate degradation out of lysosomes, driven by outwardly directed lysosomal pH gradient. May regulate lysosome function and metabolism of sialylated conjugates that impact oligodendrocyte lineage differentiation and myelinogenesis in the central nervous system (By similarity) (PubMed:15510212, PubMed:21781115, PubMed:22778404, PubMed:23889254). Electrogenic proton-coupled nitrate symporter that transports nitrate ions across the basolateral membrane of salivary gland acinar cells, with nitrate to proton stoichiometry of 2:1. May contribute to nitrate clearance from serum by salivary glands, where it is further concentrated and secreted in the saliva (PubMed:22778404). Uses membrane potential to drive the uptake of acidic amino acids and peptides into synaptic vesicles. Responsible for synaptic vesicular storage of L-aspartate and L-glutamate in pinealocytes as well as vesicular uptake of N-acetyl-L-aspartyl-L-glutamate neuropeptide, relevant to aspartegic-associated glutamatergic neurotransmission and activation of metabotropic receptors that inhibit subsequent transmitter release (By similarity) (PubMed:21781115, PubMed:22778404, PubMed:23889254).</text>
</comment>
<comment type="function">
    <text evidence="3">Receptor for CM101, a polysaccharide produced by group B Streptococcus with antipathoangiogenic properties.</text>
</comment>
<comment type="catalytic activity">
    <reaction evidence="11 13 14 15">
        <text>N-acetylneuraminate(in) + H(+)(in) = N-acetylneuraminate(out) + H(+)(out)</text>
        <dbReference type="Rhea" id="RHEA:28987"/>
        <dbReference type="ChEBI" id="CHEBI:15378"/>
        <dbReference type="ChEBI" id="CHEBI:35418"/>
    </reaction>
    <physiologicalReaction direction="right-to-left" evidence="20 21">
        <dbReference type="Rhea" id="RHEA:28989"/>
    </physiologicalReaction>
</comment>
<comment type="catalytic activity">
    <reaction evidence="1 20">
        <text>D-glucuronate(out) + H(+)(out) = D-glucuronate(in) + H(+)(in)</text>
        <dbReference type="Rhea" id="RHEA:72591"/>
        <dbReference type="ChEBI" id="CHEBI:15378"/>
        <dbReference type="ChEBI" id="CHEBI:58720"/>
    </reaction>
    <physiologicalReaction direction="left-to-right" evidence="20">
        <dbReference type="Rhea" id="RHEA:72592"/>
    </physiologicalReaction>
</comment>
<comment type="catalytic activity">
    <reaction evidence="14">
        <text>2 nitrate(out) + H(+)(out) = 2 nitrate(in) + H(+)(in)</text>
        <dbReference type="Rhea" id="RHEA:71539"/>
        <dbReference type="ChEBI" id="CHEBI:15378"/>
        <dbReference type="ChEBI" id="CHEBI:17632"/>
    </reaction>
    <physiologicalReaction direction="left-to-right" evidence="22">
        <dbReference type="Rhea" id="RHEA:71540"/>
    </physiologicalReaction>
</comment>
<comment type="catalytic activity">
    <reaction evidence="13 14">
        <text>L-aspartate(out) = L-aspartate(in)</text>
        <dbReference type="Rhea" id="RHEA:66332"/>
        <dbReference type="ChEBI" id="CHEBI:29991"/>
    </reaction>
    <physiologicalReaction direction="left-to-right" evidence="21 22">
        <dbReference type="Rhea" id="RHEA:66333"/>
    </physiologicalReaction>
</comment>
<comment type="catalytic activity">
    <reaction evidence="13 14">
        <text>L-glutamate(out) = L-glutamate(in)</text>
        <dbReference type="Rhea" id="RHEA:66336"/>
        <dbReference type="ChEBI" id="CHEBI:29985"/>
    </reaction>
    <physiologicalReaction direction="left-to-right" evidence="21 22">
        <dbReference type="Rhea" id="RHEA:66337"/>
    </physiologicalReaction>
</comment>
<comment type="catalytic activity">
    <reaction evidence="15">
        <text>N-acetyl-L-aspartyl-L-glutamate(out) = N-acetyl-L-aspartyl-L-glutamate(in)</text>
        <dbReference type="Rhea" id="RHEA:72599"/>
        <dbReference type="ChEBI" id="CHEBI:76931"/>
    </reaction>
    <physiologicalReaction direction="left-to-right" evidence="23">
        <dbReference type="Rhea" id="RHEA:72600"/>
    </physiologicalReaction>
</comment>
<comment type="biophysicochemical properties">
    <kinetics>
        <KM evidence="15">0.2 mM for N-acetyl-L-aspartyl-L-glutamate</KM>
        <KM evidence="11">1.52 mM for N-acetylneuraminate</KM>
        <KM evidence="13">0.55 mM for L-aspartate</KM>
        <Vmax evidence="15">2234.0 nmol/min/mg enzyme toward N-acetyl-L-aspartyl-L-glutamate</Vmax>
        <Vmax evidence="13">182.0 nmol/min/mg enzyme toward L-aspartate</Vmax>
    </kinetics>
</comment>
<comment type="subcellular location">
    <subcellularLocation>
        <location evidence="14">Basolateral cell membrane</location>
        <topology evidence="4">Multi-pass membrane protein</topology>
    </subcellularLocation>
    <subcellularLocation>
        <location evidence="13">Cytoplasmic vesicle</location>
        <location evidence="13">Secretory vesicle</location>
        <location evidence="13">Synaptic vesicle membrane</location>
        <topology evidence="4">Multi-pass membrane protein</topology>
    </subcellularLocation>
    <subcellularLocation>
        <location evidence="11 12 14">Lysosome membrane</location>
        <topology evidence="4">Multi-pass membrane protein</topology>
    </subcellularLocation>
</comment>
<comment type="alternative products">
    <event type="alternative splicing"/>
    <isoform>
        <id>Q9NRA2-1</id>
        <name>1</name>
        <sequence type="displayed"/>
    </isoform>
    <isoform>
        <id>Q9NRA2-2</id>
        <name>2</name>
        <sequence type="described" ref="VSP_010482 VSP_010483"/>
    </isoform>
</comment>
<comment type="tissue specificity">
    <text evidence="6 8 14">In the adult, detected in placenta, kidney and pancreas. Abundant in the endothelial cells of tumors from ovary, colon, breast and lung, but is not detected in endothelial cells from the corresponding normal tissues (PubMed:10581036, PubMed:11751519). Highly expressed in salivary glands and liver, with lower levels of expression in brain, spleen kidney, muscle and pancreas. Expressed in acinar cells of salivary glands (at protein level) (PubMed:22778404).</text>
</comment>
<comment type="developmental stage">
    <text evidence="8">Found in fetal lung and small intestine, and at lower level in fetal skin and muscle.</text>
</comment>
<comment type="disease" evidence="6 7 9 11 13 14">
    <disease id="DI-02278">
        <name>Salla disease</name>
        <acronym>SD</acronym>
        <description>Sialic acid storage disease (SASD). SASDs are autosomal recessive neurodegenerative disorders characterized by hypotonia, cerebellar ataxia and intellectual disability. They are caused by a defect in the metabolism of sialic acid which results in increased urinary excretion of unconjugated sialic acid, specifically N-acetylneuraminic acid. Enlarged lysosomes are seen on electron microscopic studies. Clinical symptoms of SD present usually at age less than 1 year and progression is slow.</description>
        <dbReference type="MIM" id="604369"/>
    </disease>
    <text>The disease is caused by variants affecting the gene represented in this entry.</text>
</comment>
<comment type="disease" evidence="6 7 10 11 13 14">
    <disease id="DI-01820">
        <name>Infantile sialic acid storage disorder</name>
        <acronym>ISSD</acronym>
        <description>Severe form of sialic acid storage disease. Affected newborns exhibit visceromegaly, coarse features and failure to thrive immediately after birth. These patients have a shortened life span, usually less than 2 years.</description>
        <dbReference type="MIM" id="269920"/>
    </disease>
    <text>The disease is caused by variants affecting the gene represented in this entry.</text>
</comment>
<comment type="similarity">
    <text evidence="19">Belongs to the major facilitator superfamily. Sodium/anion cotransporter family.</text>
</comment>
<comment type="sequence caution" evidence="19">
    <conflict type="erroneous initiation">
        <sequence resource="EMBL-CDS" id="AAF97769"/>
    </conflict>
</comment>
<protein>
    <recommendedName>
        <fullName>Sialin</fullName>
    </recommendedName>
    <alternativeName>
        <fullName>H(+)/nitrate cotransporter</fullName>
    </alternativeName>
    <alternativeName>
        <fullName>H(+)/sialic acid cotransporter</fullName>
        <shortName>AST</shortName>
    </alternativeName>
    <alternativeName>
        <fullName evidence="16">Membrane glycoprotein HP59</fullName>
    </alternativeName>
    <alternativeName>
        <fullName>Solute carrier family 17 member 5</fullName>
    </alternativeName>
    <alternativeName>
        <fullName evidence="2">Vesicular excitatory amino acid transporter</fullName>
        <shortName evidence="2">VEAT</shortName>
    </alternativeName>
</protein>
<feature type="chain" id="PRO_0000220947" description="Sialin">
    <location>
        <begin position="1"/>
        <end position="495"/>
    </location>
</feature>
<feature type="topological domain" description="Cytoplasmic" evidence="4">
    <location>
        <begin position="1"/>
        <end position="41"/>
    </location>
</feature>
<feature type="transmembrane region" description="Helical" evidence="4">
    <location>
        <begin position="42"/>
        <end position="62"/>
    </location>
</feature>
<feature type="topological domain" description="Lumenal" evidence="4">
    <location>
        <begin position="63"/>
        <end position="109"/>
    </location>
</feature>
<feature type="transmembrane region" description="Helical" evidence="4">
    <location>
        <begin position="110"/>
        <end position="130"/>
    </location>
</feature>
<feature type="topological domain" description="Cytoplasmic" evidence="4">
    <location>
        <begin position="131"/>
        <end position="136"/>
    </location>
</feature>
<feature type="transmembrane region" description="Helical" evidence="4">
    <location>
        <begin position="137"/>
        <end position="157"/>
    </location>
</feature>
<feature type="topological domain" description="Lumenal" evidence="4">
    <location>
        <position position="158"/>
    </location>
</feature>
<feature type="transmembrane region" description="Helical" evidence="4">
    <location>
        <begin position="159"/>
        <end position="179"/>
    </location>
</feature>
<feature type="topological domain" description="Cytoplasmic" evidence="4">
    <location>
        <begin position="180"/>
        <end position="200"/>
    </location>
</feature>
<feature type="transmembrane region" description="Helical" evidence="4">
    <location>
        <begin position="201"/>
        <end position="221"/>
    </location>
</feature>
<feature type="topological domain" description="Lumenal" evidence="4">
    <location>
        <begin position="222"/>
        <end position="227"/>
    </location>
</feature>
<feature type="transmembrane region" description="Helical" evidence="4">
    <location>
        <begin position="228"/>
        <end position="248"/>
    </location>
</feature>
<feature type="topological domain" description="Cytoplasmic" evidence="4">
    <location>
        <begin position="249"/>
        <end position="279"/>
    </location>
</feature>
<feature type="transmembrane region" description="Helical" evidence="4">
    <location>
        <begin position="280"/>
        <end position="300"/>
    </location>
</feature>
<feature type="topological domain" description="Lumenal" evidence="4">
    <location>
        <begin position="301"/>
        <end position="328"/>
    </location>
</feature>
<feature type="transmembrane region" description="Helical" evidence="4">
    <location>
        <begin position="329"/>
        <end position="349"/>
    </location>
</feature>
<feature type="topological domain" description="Cytoplasmic" evidence="4">
    <location>
        <begin position="350"/>
        <end position="365"/>
    </location>
</feature>
<feature type="transmembrane region" description="Helical" evidence="4">
    <location>
        <begin position="366"/>
        <end position="386"/>
    </location>
</feature>
<feature type="topological domain" description="Lumenal" evidence="4">
    <location>
        <begin position="387"/>
        <end position="391"/>
    </location>
</feature>
<feature type="transmembrane region" description="Helical" evidence="4">
    <location>
        <begin position="392"/>
        <end position="412"/>
    </location>
</feature>
<feature type="topological domain" description="Cytoplasmic" evidence="4">
    <location>
        <begin position="413"/>
        <end position="423"/>
    </location>
</feature>
<feature type="transmembrane region" description="Helical" evidence="4">
    <location>
        <begin position="424"/>
        <end position="444"/>
    </location>
</feature>
<feature type="topological domain" description="Lumenal" evidence="4">
    <location>
        <begin position="445"/>
        <end position="457"/>
    </location>
</feature>
<feature type="transmembrane region" description="Helical" evidence="4">
    <location>
        <begin position="458"/>
        <end position="478"/>
    </location>
</feature>
<feature type="topological domain" description="Cytoplasmic" evidence="4">
    <location>
        <begin position="479"/>
        <end position="495"/>
    </location>
</feature>
<feature type="region of interest" description="Disordered" evidence="5">
    <location>
        <begin position="1"/>
        <end position="24"/>
    </location>
</feature>
<feature type="short sequence motif" description="Dileucine internalization motif" evidence="11">
    <location>
        <begin position="22"/>
        <end position="23"/>
    </location>
</feature>
<feature type="compositionally biased region" description="Basic and acidic residues" evidence="5">
    <location>
        <begin position="1"/>
        <end position="18"/>
    </location>
</feature>
<feature type="modified residue" description="Phosphoserine" evidence="24">
    <location>
        <position position="3"/>
    </location>
</feature>
<feature type="glycosylation site" description="N-linked (GlcNAc...) asparagine" evidence="4">
    <location>
        <position position="71"/>
    </location>
</feature>
<feature type="glycosylation site" description="N-linked (GlcNAc...) asparagine" evidence="4">
    <location>
        <position position="77"/>
    </location>
</feature>
<feature type="glycosylation site" description="N-linked (GlcNAc...) asparagine" evidence="4">
    <location>
        <position position="95"/>
    </location>
</feature>
<feature type="splice variant" id="VSP_010482" description="In isoform 2." evidence="17 18">
    <original>LSS</original>
    <variation>AGV</variation>
    <location>
        <begin position="274"/>
        <end position="276"/>
    </location>
</feature>
<feature type="splice variant" id="VSP_010483" description="In isoform 2." evidence="17 18">
    <location>
        <begin position="278"/>
        <end position="495"/>
    </location>
</feature>
<feature type="sequence variant" id="VAR_018684" description="In SD; frequent variant in Finland; alters intracellular localization, only partially targeted to lysosomes and mainly detected in LAMP1-negative vesicles and in the Golgi apparatus; completely devoid of L-aspartate and L-glutamate transport activity, but retains appreciable H(+)-coupled sialic acid and nitrate transporter activity; dbSNP:rs80338794." evidence="6 7 9 11 13 14">
    <original>R</original>
    <variation>C</variation>
    <location>
        <position position="39"/>
    </location>
</feature>
<feature type="sequence variant" id="VAR_018685" description="In SD; alters intracellular localization, only partially targeted to lysosomes and mainly detected in LAMP1-negative vesicles and in the Golgi apparatus; completely devoid of L-aspartate and L-glutamate transporter activity, but retains appreciable H(+)-coupled sialic acid transporter activity; dbSNP:rs80338795." evidence="7 11 13">
    <original>K</original>
    <variation>E</variation>
    <location>
        <position position="136"/>
    </location>
</feature>
<feature type="sequence variant" id="VAR_018686" description="In ISSD; alters intracellular localization, only partially targeted to lysosomes and mainly detected in LAMP1-negative vesicles and in the Golgi apparatus; abolishes H(+)-coupled sialic acid transporter activity; has normal L-aspartate and L-glutamate transporter activity; dbSNP:rs119491109." evidence="6 7 11 13">
    <original>H</original>
    <variation>R</variation>
    <location>
        <position position="183"/>
    </location>
</feature>
<feature type="sequence variant" id="VAR_018687" description="In ISSD; alters intracellular localization, only partially targeted to lysosomes and mainly detected in LAMP1-negative vesicles and in the Golgi apparatus; abolishes H(+)-coupled sialic acid transporter activity; has normal L-aspartate and L-glutamate transporter activity." evidence="6 7 11 13">
    <location>
        <begin position="268"/>
        <end position="272"/>
    </location>
</feature>
<feature type="sequence variant" id="VAR_034746" description="In dbSNP:rs16883930.">
    <original>V</original>
    <variation>I</variation>
    <location>
        <position position="296"/>
    </location>
</feature>
<feature type="sequence variant" id="VAR_087626" description="In ISSD; some patients may manifest a milder phenotype consistent with Salla disease; markedly decreases H(+)-coupled sialic acid transporter activity; abolishes L-aspartate and L-glutamate transporter activity; dbSNP:rs386833996." evidence="10 13">
    <original>G</original>
    <variation>E</variation>
    <location>
        <position position="328"/>
    </location>
</feature>
<feature type="sequence variant" id="VAR_018688" description="In ISSD; does not affect intracellular localization, targeted to lysosomes; abolishes H(+)-coupled sialic acid transporter activity; abolishes L-aspartate and L-glutamate transporter activity; dbSNP:rs119491110." evidence="6 7 11 13">
    <original>P</original>
    <variation>R</variation>
    <location>
        <position position="334"/>
    </location>
</feature>
<feature type="sequence variant" id="VAR_018689" description="In ISSD; abolishes H(+)-coupled sialic acid transporter activity; abolishes L-aspartate and L-glutamate transporter activity; dbSNP:rs777862172." evidence="7 13">
    <original>G</original>
    <variation>V</variation>
    <location>
        <position position="371"/>
    </location>
</feature>
<feature type="mutagenesis site" description="Targeted to plasma membrane." evidence="11">
    <original>LL</original>
    <variation>AA</variation>
    <location>
        <begin position="22"/>
        <end position="23"/>
    </location>
</feature>
<feature type="mutagenesis site" description="Targeted to plasma membrane; sialic acid uptake strongly activated at acidic pH." evidence="11 14 15">
    <original>LL</original>
    <variation>GG</variation>
    <location>
        <begin position="22"/>
        <end position="23"/>
    </location>
</feature>
<feature type="mutagenesis site" description="Localizes in vesicular structures mainly concentrated in the perinuclear region." evidence="11">
    <original>LL</original>
    <variation>AA</variation>
    <location>
        <begin position="198"/>
        <end position="199"/>
    </location>
</feature>
<feature type="mutagenesis site" description="Localizes in vesicular structures mainly concentrated in the perinuclear region." evidence="11">
    <original>IL</original>
    <variation>LA</variation>
    <location>
        <begin position="266"/>
        <end position="267"/>
    </location>
</feature>
<feature type="strand" evidence="25">
    <location>
        <begin position="34"/>
        <end position="37"/>
    </location>
</feature>
<feature type="helix" evidence="26">
    <location>
        <begin position="38"/>
        <end position="67"/>
    </location>
</feature>
<feature type="helix" evidence="26">
    <location>
        <begin position="105"/>
        <end position="119"/>
    </location>
</feature>
<feature type="turn" evidence="27">
    <location>
        <begin position="120"/>
        <end position="122"/>
    </location>
</feature>
<feature type="helix" evidence="26">
    <location>
        <begin position="124"/>
        <end position="133"/>
    </location>
</feature>
<feature type="helix" evidence="26">
    <location>
        <begin position="135"/>
        <end position="150"/>
    </location>
</feature>
<feature type="helix" evidence="26">
    <location>
        <begin position="153"/>
        <end position="159"/>
    </location>
</feature>
<feature type="helix" evidence="26">
    <location>
        <begin position="161"/>
        <end position="176"/>
    </location>
</feature>
<feature type="helix" evidence="26">
    <location>
        <begin position="178"/>
        <end position="189"/>
    </location>
</feature>
<feature type="helix" evidence="26">
    <location>
        <begin position="192"/>
        <end position="194"/>
    </location>
</feature>
<feature type="helix" evidence="26">
    <location>
        <begin position="195"/>
        <end position="223"/>
    </location>
</feature>
<feature type="helix" evidence="26">
    <location>
        <begin position="227"/>
        <end position="247"/>
    </location>
</feature>
<feature type="turn" evidence="26">
    <location>
        <begin position="252"/>
        <end position="254"/>
    </location>
</feature>
<feature type="helix" evidence="26">
    <location>
        <begin position="260"/>
        <end position="270"/>
    </location>
</feature>
<feature type="turn" evidence="26">
    <location>
        <begin position="271"/>
        <end position="275"/>
    </location>
</feature>
<feature type="strand" evidence="27">
    <location>
        <begin position="279"/>
        <end position="281"/>
    </location>
</feature>
<feature type="helix" evidence="28">
    <location>
        <begin position="282"/>
        <end position="287"/>
    </location>
</feature>
<feature type="helix" evidence="26">
    <location>
        <begin position="289"/>
        <end position="318"/>
    </location>
</feature>
<feature type="helix" evidence="26">
    <location>
        <begin position="324"/>
        <end position="355"/>
    </location>
</feature>
<feature type="turn" evidence="26">
    <location>
        <begin position="358"/>
        <end position="361"/>
    </location>
</feature>
<feature type="helix" evidence="26">
    <location>
        <begin position="362"/>
        <end position="384"/>
    </location>
</feature>
<feature type="turn" evidence="26">
    <location>
        <begin position="385"/>
        <end position="387"/>
    </location>
</feature>
<feature type="helix" evidence="26">
    <location>
        <begin position="389"/>
        <end position="402"/>
    </location>
</feature>
<feature type="helix" evidence="26">
    <location>
        <begin position="403"/>
        <end position="407"/>
    </location>
</feature>
<feature type="helix" evidence="26">
    <location>
        <begin position="410"/>
        <end position="413"/>
    </location>
</feature>
<feature type="helix" evidence="26">
    <location>
        <begin position="414"/>
        <end position="417"/>
    </location>
</feature>
<feature type="helix" evidence="28">
    <location>
        <begin position="419"/>
        <end position="421"/>
    </location>
</feature>
<feature type="helix" evidence="26">
    <location>
        <begin position="422"/>
        <end position="433"/>
    </location>
</feature>
<feature type="helix" evidence="26">
    <location>
        <begin position="435"/>
        <end position="447"/>
    </location>
</feature>
<feature type="helix" evidence="26">
    <location>
        <begin position="453"/>
        <end position="477"/>
    </location>
</feature>
<feature type="helix" evidence="26">
    <location>
        <begin position="484"/>
        <end position="486"/>
    </location>
</feature>
<accession>Q9NRA2</accession>
<accession>Q5SZ76</accession>
<accession>Q8NBR5</accession>
<accession>Q9UGH0</accession>